<comment type="function">
    <text evidence="1">Co-chaperone involved in the maturation of iron-sulfur cluster-containing proteins. Seems to help targeting proteins to be folded toward HscA.</text>
</comment>
<comment type="subunit">
    <text evidence="1">Interacts with HscA and stimulates its ATPase activity.</text>
</comment>
<comment type="similarity">
    <text evidence="1">Belongs to the HscB family.</text>
</comment>
<feature type="chain" id="PRO_1000131730" description="Co-chaperone protein HscB homolog">
    <location>
        <begin position="1"/>
        <end position="175"/>
    </location>
</feature>
<feature type="domain" description="J" evidence="1">
    <location>
        <begin position="7"/>
        <end position="79"/>
    </location>
</feature>
<accession>B2T5L9</accession>
<name>HSCB_PARPJ</name>
<keyword id="KW-0143">Chaperone</keyword>
<evidence type="ECO:0000255" key="1">
    <source>
        <dbReference type="HAMAP-Rule" id="MF_00682"/>
    </source>
</evidence>
<organism>
    <name type="scientific">Paraburkholderia phytofirmans (strain DSM 17436 / LMG 22146 / PsJN)</name>
    <name type="common">Burkholderia phytofirmans</name>
    <dbReference type="NCBI Taxonomy" id="398527"/>
    <lineage>
        <taxon>Bacteria</taxon>
        <taxon>Pseudomonadati</taxon>
        <taxon>Pseudomonadota</taxon>
        <taxon>Betaproteobacteria</taxon>
        <taxon>Burkholderiales</taxon>
        <taxon>Burkholderiaceae</taxon>
        <taxon>Paraburkholderia</taxon>
    </lineage>
</organism>
<gene>
    <name evidence="1" type="primary">hscB</name>
    <name type="ordered locus">Bphyt_2576</name>
</gene>
<reference key="1">
    <citation type="journal article" date="2011" name="J. Bacteriol.">
        <title>Complete genome sequence of the plant growth-promoting endophyte Burkholderia phytofirmans strain PsJN.</title>
        <authorList>
            <person name="Weilharter A."/>
            <person name="Mitter B."/>
            <person name="Shin M.V."/>
            <person name="Chain P.S."/>
            <person name="Nowak J."/>
            <person name="Sessitsch A."/>
        </authorList>
    </citation>
    <scope>NUCLEOTIDE SEQUENCE [LARGE SCALE GENOMIC DNA]</scope>
    <source>
        <strain>DSM 17436 / LMG 22146 / PsJN</strain>
    </source>
</reference>
<protein>
    <recommendedName>
        <fullName evidence="1">Co-chaperone protein HscB homolog</fullName>
    </recommendedName>
</protein>
<proteinExistence type="inferred from homology"/>
<dbReference type="EMBL" id="CP001052">
    <property type="protein sequence ID" value="ACD16971.1"/>
    <property type="molecule type" value="Genomic_DNA"/>
</dbReference>
<dbReference type="RefSeq" id="WP_012433564.1">
    <property type="nucleotide sequence ID" value="NC_010681.1"/>
</dbReference>
<dbReference type="SMR" id="B2T5L9"/>
<dbReference type="STRING" id="398527.Bphyt_2576"/>
<dbReference type="KEGG" id="bpy:Bphyt_2576"/>
<dbReference type="eggNOG" id="COG1076">
    <property type="taxonomic scope" value="Bacteria"/>
</dbReference>
<dbReference type="HOGENOM" id="CLU_068529_2_1_4"/>
<dbReference type="OrthoDB" id="287587at2"/>
<dbReference type="Proteomes" id="UP000001739">
    <property type="component" value="Chromosome 1"/>
</dbReference>
<dbReference type="GO" id="GO:1990230">
    <property type="term" value="C:iron-sulfur cluster transfer complex"/>
    <property type="evidence" value="ECO:0007669"/>
    <property type="project" value="TreeGrafter"/>
</dbReference>
<dbReference type="GO" id="GO:0001671">
    <property type="term" value="F:ATPase activator activity"/>
    <property type="evidence" value="ECO:0007669"/>
    <property type="project" value="InterPro"/>
</dbReference>
<dbReference type="GO" id="GO:0051087">
    <property type="term" value="F:protein-folding chaperone binding"/>
    <property type="evidence" value="ECO:0007669"/>
    <property type="project" value="InterPro"/>
</dbReference>
<dbReference type="GO" id="GO:0044571">
    <property type="term" value="P:[2Fe-2S] cluster assembly"/>
    <property type="evidence" value="ECO:0007669"/>
    <property type="project" value="InterPro"/>
</dbReference>
<dbReference type="GO" id="GO:0051259">
    <property type="term" value="P:protein complex oligomerization"/>
    <property type="evidence" value="ECO:0007669"/>
    <property type="project" value="InterPro"/>
</dbReference>
<dbReference type="GO" id="GO:0006457">
    <property type="term" value="P:protein folding"/>
    <property type="evidence" value="ECO:0007669"/>
    <property type="project" value="UniProtKB-UniRule"/>
</dbReference>
<dbReference type="CDD" id="cd06257">
    <property type="entry name" value="DnaJ"/>
    <property type="match status" value="1"/>
</dbReference>
<dbReference type="Gene3D" id="1.10.287.110">
    <property type="entry name" value="DnaJ domain"/>
    <property type="match status" value="1"/>
</dbReference>
<dbReference type="Gene3D" id="1.20.1280.20">
    <property type="entry name" value="HscB, C-terminal domain"/>
    <property type="match status" value="1"/>
</dbReference>
<dbReference type="HAMAP" id="MF_00682">
    <property type="entry name" value="HscB"/>
    <property type="match status" value="1"/>
</dbReference>
<dbReference type="InterPro" id="IPR001623">
    <property type="entry name" value="DnaJ_domain"/>
</dbReference>
<dbReference type="InterPro" id="IPR004640">
    <property type="entry name" value="HscB"/>
</dbReference>
<dbReference type="InterPro" id="IPR036386">
    <property type="entry name" value="HscB_C_sf"/>
</dbReference>
<dbReference type="InterPro" id="IPR009073">
    <property type="entry name" value="HscB_oligo_C"/>
</dbReference>
<dbReference type="InterPro" id="IPR036869">
    <property type="entry name" value="J_dom_sf"/>
</dbReference>
<dbReference type="NCBIfam" id="TIGR00714">
    <property type="entry name" value="hscB"/>
    <property type="match status" value="1"/>
</dbReference>
<dbReference type="NCBIfam" id="NF002935">
    <property type="entry name" value="PRK03578.1"/>
    <property type="match status" value="1"/>
</dbReference>
<dbReference type="PANTHER" id="PTHR14021">
    <property type="entry name" value="IRON-SULFUR CLUSTER CO-CHAPERONE PROTEIN HSCB"/>
    <property type="match status" value="1"/>
</dbReference>
<dbReference type="PANTHER" id="PTHR14021:SF15">
    <property type="entry name" value="IRON-SULFUR CLUSTER CO-CHAPERONE PROTEIN HSCB"/>
    <property type="match status" value="1"/>
</dbReference>
<dbReference type="Pfam" id="PF07743">
    <property type="entry name" value="HSCB_C"/>
    <property type="match status" value="1"/>
</dbReference>
<dbReference type="SMART" id="SM00271">
    <property type="entry name" value="DnaJ"/>
    <property type="match status" value="1"/>
</dbReference>
<dbReference type="SUPFAM" id="SSF46565">
    <property type="entry name" value="Chaperone J-domain"/>
    <property type="match status" value="1"/>
</dbReference>
<dbReference type="SUPFAM" id="SSF47144">
    <property type="entry name" value="HSC20 (HSCB), C-terminal oligomerisation domain"/>
    <property type="match status" value="1"/>
</dbReference>
<dbReference type="PROSITE" id="PS50076">
    <property type="entry name" value="DNAJ_2"/>
    <property type="match status" value="1"/>
</dbReference>
<sequence>MASLNDSHFDLFDLPAQFALDASALDHAYRTVQAQVHPDRFAAAGDAQKRIAMQWATRTNEAYQTLRDPLKRATYLLHLRGIDVGAHENTAMEPAFLMQQMEWREGIEDAAAAKNVDALDALLTELRDEERMRFDKLGALLDSGANQAAGEAVRQLMFIERVASEIGTQIERLDN</sequence>